<evidence type="ECO:0000250" key="1"/>
<evidence type="ECO:0000255" key="2">
    <source>
        <dbReference type="PROSITE-ProRule" id="PRU00125"/>
    </source>
</evidence>
<evidence type="ECO:0000255" key="3">
    <source>
        <dbReference type="PROSITE-ProRule" id="PRU00636"/>
    </source>
</evidence>
<evidence type="ECO:0000256" key="4">
    <source>
        <dbReference type="SAM" id="MobiDB-lite"/>
    </source>
</evidence>
<evidence type="ECO:0000305" key="5"/>
<reference key="1">
    <citation type="submission" date="2005-10" db="EMBL/GenBank/DDBJ databases">
        <title>NISC comparative sequencing initiative.</title>
        <authorList>
            <person name="Antonellis A."/>
            <person name="Ayele K."/>
            <person name="Benjamin B."/>
            <person name="Blakesley R.W."/>
            <person name="Boakye A."/>
            <person name="Bouffard G.G."/>
            <person name="Brinkley C."/>
            <person name="Brooks S."/>
            <person name="Chu G."/>
            <person name="Coleman H."/>
            <person name="Engle J."/>
            <person name="Gestole M."/>
            <person name="Greene A."/>
            <person name="Guan X."/>
            <person name="Gupta J."/>
            <person name="Haghighi P."/>
            <person name="Han J."/>
            <person name="Hansen N."/>
            <person name="Ho S.-L."/>
            <person name="Hu P."/>
            <person name="Hunter G."/>
            <person name="Hurle B."/>
            <person name="Idol J.R."/>
            <person name="Kwong P."/>
            <person name="Laric P."/>
            <person name="Larson S."/>
            <person name="Lee-Lin S.-Q."/>
            <person name="Legaspi R."/>
            <person name="Madden M."/>
            <person name="Maduro Q.L."/>
            <person name="Maduro V.B."/>
            <person name="Margulies E.H."/>
            <person name="Masiello C."/>
            <person name="Maskeri B."/>
            <person name="McDowell J."/>
            <person name="Mojidi H.A."/>
            <person name="Mullikin J.C."/>
            <person name="Oestreicher J.S."/>
            <person name="Park M."/>
            <person name="Portnoy M.E."/>
            <person name="Prasad A."/>
            <person name="Puri O."/>
            <person name="Reddix-Dugue N."/>
            <person name="Schandler K."/>
            <person name="Schueler M.G."/>
            <person name="Sison C."/>
            <person name="Stantripop S."/>
            <person name="Stephen E."/>
            <person name="Taye A."/>
            <person name="Thomas J.W."/>
            <person name="Thomas P.J."/>
            <person name="Tsipouri V."/>
            <person name="Ung L."/>
            <person name="Vogt J.L."/>
            <person name="Wetherby K.D."/>
            <person name="Young A."/>
            <person name="Green E.D."/>
        </authorList>
    </citation>
    <scope>NUCLEOTIDE SEQUENCE [LARGE SCALE GENOMIC DNA]</scope>
</reference>
<protein>
    <recommendedName>
        <fullName>Testin</fullName>
    </recommendedName>
</protein>
<sequence length="421" mass="47869">MDLENKVKKMGLGHEQGFGAPCLKCKEKCEGFELHFWRKICRNCKCGQEEHDVLLSNEEDRKVGKLFEDTKYTTLIAKLKSDGIPMYKRNVMILTNPVAAKKNVSINTVTYEWAPPVHNQALARQYMQMLPKEKQPVAGSEGAQYRKKQLAKQLPAHDQDPSKCHELSPREVKEMEQFVKKYKSEALGVGDVKLPCEMDAQGPKQMYIPGGDRSTPPAAGAMEDKSAEHKSTQYSCYCCKLSMKEGDPAIYAERAGYDKLWHPACFVCSICHELLVDMIYFWKNEKLYCGRHYCDSEKPRCAGCDELIFSNEYTQAEKQSWHLKHFCCFACDGILAGDIYVMVNDKPVCKPCYVKNHAVVCQGCHNAIDPEVQRVTYNNFSWHASTECFLCSCCSKCLIGQKFMPVEGMVFCSVECKKMMS</sequence>
<feature type="chain" id="PRO_0000226345" description="Testin">
    <location>
        <begin position="1"/>
        <end position="421"/>
    </location>
</feature>
<feature type="domain" description="PET" evidence="3">
    <location>
        <begin position="92"/>
        <end position="199"/>
    </location>
</feature>
<feature type="domain" description="LIM zinc-binding 1" evidence="2">
    <location>
        <begin position="234"/>
        <end position="297"/>
    </location>
</feature>
<feature type="domain" description="LIM zinc-binding 2" evidence="2">
    <location>
        <begin position="299"/>
        <end position="359"/>
    </location>
</feature>
<feature type="domain" description="LIM zinc-binding 3" evidence="2">
    <location>
        <begin position="362"/>
        <end position="421"/>
    </location>
</feature>
<feature type="region of interest" description="Disordered" evidence="4">
    <location>
        <begin position="133"/>
        <end position="164"/>
    </location>
</feature>
<feature type="compositionally biased region" description="Basic and acidic residues" evidence="4">
    <location>
        <begin position="155"/>
        <end position="164"/>
    </location>
</feature>
<keyword id="KW-0965">Cell junction</keyword>
<keyword id="KW-0963">Cytoplasm</keyword>
<keyword id="KW-0440">LIM domain</keyword>
<keyword id="KW-0479">Metal-binding</keyword>
<keyword id="KW-1185">Reference proteome</keyword>
<keyword id="KW-0677">Repeat</keyword>
<keyword id="KW-0862">Zinc</keyword>
<name>TES_CALJA</name>
<proteinExistence type="inferred from homology"/>
<dbReference type="EMBL" id="DP000014">
    <property type="protein sequence ID" value="ABA90388.1"/>
    <property type="molecule type" value="Genomic_DNA"/>
</dbReference>
<dbReference type="RefSeq" id="XP_009000984.1">
    <property type="nucleotide sequence ID" value="XM_009002736.4"/>
</dbReference>
<dbReference type="SMR" id="Q2QLG8"/>
<dbReference type="FunCoup" id="Q2QLG8">
    <property type="interactions" value="917"/>
</dbReference>
<dbReference type="STRING" id="9483.ENSCJAP00000009479"/>
<dbReference type="Ensembl" id="ENSCJAT00000071210.3">
    <property type="protein sequence ID" value="ENSCJAP00000059345.3"/>
    <property type="gene ID" value="ENSCJAG00000005193.5"/>
</dbReference>
<dbReference type="GeneID" id="100407335"/>
<dbReference type="KEGG" id="cjc:100407335"/>
<dbReference type="CTD" id="26136"/>
<dbReference type="eggNOG" id="KOG1704">
    <property type="taxonomic scope" value="Eukaryota"/>
</dbReference>
<dbReference type="GeneTree" id="ENSGT00940000155993"/>
<dbReference type="InParanoid" id="Q2QLG8"/>
<dbReference type="OMA" id="PHMGPHS"/>
<dbReference type="OrthoDB" id="10069167at2759"/>
<dbReference type="TreeFam" id="TF313265"/>
<dbReference type="Proteomes" id="UP000008225">
    <property type="component" value="Chromosome 8"/>
</dbReference>
<dbReference type="GO" id="GO:0005737">
    <property type="term" value="C:cytoplasm"/>
    <property type="evidence" value="ECO:0000250"/>
    <property type="project" value="UniProtKB"/>
</dbReference>
<dbReference type="GO" id="GO:0005829">
    <property type="term" value="C:cytosol"/>
    <property type="evidence" value="ECO:0007669"/>
    <property type="project" value="Ensembl"/>
</dbReference>
<dbReference type="GO" id="GO:0005925">
    <property type="term" value="C:focal adhesion"/>
    <property type="evidence" value="ECO:0007669"/>
    <property type="project" value="UniProtKB-SubCell"/>
</dbReference>
<dbReference type="GO" id="GO:0005886">
    <property type="term" value="C:plasma membrane"/>
    <property type="evidence" value="ECO:0007669"/>
    <property type="project" value="Ensembl"/>
</dbReference>
<dbReference type="GO" id="GO:0032991">
    <property type="term" value="C:protein-containing complex"/>
    <property type="evidence" value="ECO:0007669"/>
    <property type="project" value="Ensembl"/>
</dbReference>
<dbReference type="GO" id="GO:0008270">
    <property type="term" value="F:zinc ion binding"/>
    <property type="evidence" value="ECO:0000250"/>
    <property type="project" value="UniProtKB"/>
</dbReference>
<dbReference type="GO" id="GO:0008285">
    <property type="term" value="P:negative regulation of cell population proliferation"/>
    <property type="evidence" value="ECO:0000250"/>
    <property type="project" value="UniProtKB"/>
</dbReference>
<dbReference type="CDD" id="cd09413">
    <property type="entry name" value="LIM1_Testin"/>
    <property type="match status" value="1"/>
</dbReference>
<dbReference type="CDD" id="cd09416">
    <property type="entry name" value="LIM2_Testin"/>
    <property type="match status" value="1"/>
</dbReference>
<dbReference type="CDD" id="cd09419">
    <property type="entry name" value="LIM3_Testin"/>
    <property type="match status" value="1"/>
</dbReference>
<dbReference type="CDD" id="cd09829">
    <property type="entry name" value="PET_testin"/>
    <property type="match status" value="1"/>
</dbReference>
<dbReference type="FunFam" id="2.10.110.10:FF:000061">
    <property type="entry name" value="Testin"/>
    <property type="match status" value="1"/>
</dbReference>
<dbReference type="FunFam" id="2.10.110.10:FF:000065">
    <property type="entry name" value="Testin"/>
    <property type="match status" value="1"/>
</dbReference>
<dbReference type="FunFam" id="2.10.110.10:FF:000005">
    <property type="entry name" value="Testin isoform 1"/>
    <property type="match status" value="1"/>
</dbReference>
<dbReference type="Gene3D" id="2.10.110.10">
    <property type="entry name" value="Cysteine Rich Protein"/>
    <property type="match status" value="3"/>
</dbReference>
<dbReference type="InterPro" id="IPR034958">
    <property type="entry name" value="LIM1_Testin"/>
</dbReference>
<dbReference type="InterPro" id="IPR034959">
    <property type="entry name" value="LIM2_Testin"/>
</dbReference>
<dbReference type="InterPro" id="IPR034960">
    <property type="entry name" value="LIM3_Testin"/>
</dbReference>
<dbReference type="InterPro" id="IPR010442">
    <property type="entry name" value="PET_domain"/>
</dbReference>
<dbReference type="InterPro" id="IPR033724">
    <property type="entry name" value="PET_testin"/>
</dbReference>
<dbReference type="InterPro" id="IPR047120">
    <property type="entry name" value="Pk/Esn/Tes"/>
</dbReference>
<dbReference type="InterPro" id="IPR001781">
    <property type="entry name" value="Znf_LIM"/>
</dbReference>
<dbReference type="PANTHER" id="PTHR24211">
    <property type="entry name" value="LIM DOMAIN-CONTAINING PROTEIN"/>
    <property type="match status" value="1"/>
</dbReference>
<dbReference type="PANTHER" id="PTHR24211:SF1">
    <property type="entry name" value="TESTIN"/>
    <property type="match status" value="1"/>
</dbReference>
<dbReference type="Pfam" id="PF00412">
    <property type="entry name" value="LIM"/>
    <property type="match status" value="3"/>
</dbReference>
<dbReference type="Pfam" id="PF06297">
    <property type="entry name" value="PET"/>
    <property type="match status" value="1"/>
</dbReference>
<dbReference type="SMART" id="SM00132">
    <property type="entry name" value="LIM"/>
    <property type="match status" value="3"/>
</dbReference>
<dbReference type="SUPFAM" id="SSF57716">
    <property type="entry name" value="Glucocorticoid receptor-like (DNA-binding domain)"/>
    <property type="match status" value="2"/>
</dbReference>
<dbReference type="PROSITE" id="PS00478">
    <property type="entry name" value="LIM_DOMAIN_1"/>
    <property type="match status" value="2"/>
</dbReference>
<dbReference type="PROSITE" id="PS50023">
    <property type="entry name" value="LIM_DOMAIN_2"/>
    <property type="match status" value="3"/>
</dbReference>
<dbReference type="PROSITE" id="PS51303">
    <property type="entry name" value="PET"/>
    <property type="match status" value="1"/>
</dbReference>
<organism>
    <name type="scientific">Callithrix jacchus</name>
    <name type="common">White-tufted-ear marmoset</name>
    <dbReference type="NCBI Taxonomy" id="9483"/>
    <lineage>
        <taxon>Eukaryota</taxon>
        <taxon>Metazoa</taxon>
        <taxon>Chordata</taxon>
        <taxon>Craniata</taxon>
        <taxon>Vertebrata</taxon>
        <taxon>Euteleostomi</taxon>
        <taxon>Mammalia</taxon>
        <taxon>Eutheria</taxon>
        <taxon>Euarchontoglires</taxon>
        <taxon>Primates</taxon>
        <taxon>Haplorrhini</taxon>
        <taxon>Platyrrhini</taxon>
        <taxon>Cebidae</taxon>
        <taxon>Callitrichinae</taxon>
        <taxon>Callithrix</taxon>
        <taxon>Callithrix</taxon>
    </lineage>
</organism>
<comment type="function">
    <text evidence="1">Scaffold protein that may play a role in cell adhesion, cell spreading and in the reorganization of the actin cytoskeleton. Plays a role in the regulation of cell proliferation. May act as a tumor suppressor (By similarity).</text>
</comment>
<comment type="subunit">
    <text evidence="1">Interacts via LIM domain 1 with ZYX. Interacts (via LIM domain 3) with ENAH and VASP. Interacts with ALKBH4, talin, actin, alpha-actinin, GRIP1 and PXN (By similarity). Interacts (via LIM domain 2) with ACTL7A (via N-terminus). Heterodimer with ACTL7A; the heterodimer interacts with ENAH to form a heterotrimer (By similarity).</text>
</comment>
<comment type="subcellular location">
    <subcellularLocation>
        <location evidence="1">Cytoplasm</location>
    </subcellularLocation>
    <subcellularLocation>
        <location evidence="1">Cell junction</location>
        <location evidence="1">Focal adhesion</location>
    </subcellularLocation>
    <text evidence="1">Detected along actin stress fibers.</text>
</comment>
<comment type="domain">
    <text evidence="1">The N-terminal and the C-terminal halves of the protein can associate with each other, thereby hindering interactions with ZYX.</text>
</comment>
<comment type="similarity">
    <text evidence="5">Belongs to the prickle / espinas / testin family.</text>
</comment>
<accession>Q2QLG8</accession>
<gene>
    <name type="primary">TES</name>
</gene>